<keyword id="KW-0963">Cytoplasm</keyword>
<keyword id="KW-0251">Elongation factor</keyword>
<keyword id="KW-0648">Protein biosynthesis</keyword>
<protein>
    <recommendedName>
        <fullName evidence="1">Elongation factor P</fullName>
        <shortName evidence="1">EF-P</shortName>
    </recommendedName>
</protein>
<proteinExistence type="inferred from homology"/>
<name>EFP_MYCSK</name>
<comment type="function">
    <text evidence="1">Involved in peptide bond synthesis. Stimulates efficient translation and peptide-bond synthesis on native or reconstituted 70S ribosomes in vitro. Probably functions indirectly by altering the affinity of the ribosome for aminoacyl-tRNA, thus increasing their reactivity as acceptors for peptidyl transferase.</text>
</comment>
<comment type="pathway">
    <text evidence="1">Protein biosynthesis; polypeptide chain elongation.</text>
</comment>
<comment type="subcellular location">
    <subcellularLocation>
        <location evidence="1">Cytoplasm</location>
    </subcellularLocation>
</comment>
<comment type="similarity">
    <text evidence="1">Belongs to the elongation factor P family.</text>
</comment>
<accession>A1UFJ5</accession>
<dbReference type="EMBL" id="CP000518">
    <property type="protein sequence ID" value="ABL91603.1"/>
    <property type="molecule type" value="Genomic_DNA"/>
</dbReference>
<dbReference type="SMR" id="A1UFJ5"/>
<dbReference type="STRING" id="189918.Mkms_2405"/>
<dbReference type="KEGG" id="mkm:Mkms_2405"/>
<dbReference type="HOGENOM" id="CLU_074944_0_1_11"/>
<dbReference type="OrthoDB" id="9801844at2"/>
<dbReference type="UniPathway" id="UPA00345"/>
<dbReference type="GO" id="GO:0005737">
    <property type="term" value="C:cytoplasm"/>
    <property type="evidence" value="ECO:0007669"/>
    <property type="project" value="UniProtKB-SubCell"/>
</dbReference>
<dbReference type="GO" id="GO:0003746">
    <property type="term" value="F:translation elongation factor activity"/>
    <property type="evidence" value="ECO:0007669"/>
    <property type="project" value="UniProtKB-UniRule"/>
</dbReference>
<dbReference type="GO" id="GO:0043043">
    <property type="term" value="P:peptide biosynthetic process"/>
    <property type="evidence" value="ECO:0007669"/>
    <property type="project" value="InterPro"/>
</dbReference>
<dbReference type="CDD" id="cd04470">
    <property type="entry name" value="S1_EF-P_repeat_1"/>
    <property type="match status" value="1"/>
</dbReference>
<dbReference type="CDD" id="cd05794">
    <property type="entry name" value="S1_EF-P_repeat_2"/>
    <property type="match status" value="1"/>
</dbReference>
<dbReference type="FunFam" id="2.30.30.30:FF:000003">
    <property type="entry name" value="Elongation factor P"/>
    <property type="match status" value="1"/>
</dbReference>
<dbReference type="FunFam" id="2.40.50.140:FF:000004">
    <property type="entry name" value="Elongation factor P"/>
    <property type="match status" value="1"/>
</dbReference>
<dbReference type="FunFam" id="2.40.50.140:FF:000009">
    <property type="entry name" value="Elongation factor P"/>
    <property type="match status" value="1"/>
</dbReference>
<dbReference type="Gene3D" id="2.30.30.30">
    <property type="match status" value="1"/>
</dbReference>
<dbReference type="Gene3D" id="2.40.50.140">
    <property type="entry name" value="Nucleic acid-binding proteins"/>
    <property type="match status" value="2"/>
</dbReference>
<dbReference type="HAMAP" id="MF_00141">
    <property type="entry name" value="EF_P"/>
    <property type="match status" value="1"/>
</dbReference>
<dbReference type="InterPro" id="IPR015365">
    <property type="entry name" value="Elong-fact-P_C"/>
</dbReference>
<dbReference type="InterPro" id="IPR012340">
    <property type="entry name" value="NA-bd_OB-fold"/>
</dbReference>
<dbReference type="InterPro" id="IPR014722">
    <property type="entry name" value="Rib_uL2_dom2"/>
</dbReference>
<dbReference type="InterPro" id="IPR020599">
    <property type="entry name" value="Transl_elong_fac_P/YeiP"/>
</dbReference>
<dbReference type="InterPro" id="IPR013185">
    <property type="entry name" value="Transl_elong_KOW-like"/>
</dbReference>
<dbReference type="InterPro" id="IPR001059">
    <property type="entry name" value="Transl_elong_P/YeiP_cen"/>
</dbReference>
<dbReference type="InterPro" id="IPR013852">
    <property type="entry name" value="Transl_elong_P/YeiP_CS"/>
</dbReference>
<dbReference type="InterPro" id="IPR011768">
    <property type="entry name" value="Transl_elongation_fac_P"/>
</dbReference>
<dbReference type="InterPro" id="IPR008991">
    <property type="entry name" value="Translation_prot_SH3-like_sf"/>
</dbReference>
<dbReference type="NCBIfam" id="TIGR00038">
    <property type="entry name" value="efp"/>
    <property type="match status" value="1"/>
</dbReference>
<dbReference type="NCBIfam" id="NF001810">
    <property type="entry name" value="PRK00529.1"/>
    <property type="match status" value="1"/>
</dbReference>
<dbReference type="PANTHER" id="PTHR30053">
    <property type="entry name" value="ELONGATION FACTOR P"/>
    <property type="match status" value="1"/>
</dbReference>
<dbReference type="PANTHER" id="PTHR30053:SF12">
    <property type="entry name" value="ELONGATION FACTOR P (EF-P) FAMILY PROTEIN"/>
    <property type="match status" value="1"/>
</dbReference>
<dbReference type="Pfam" id="PF01132">
    <property type="entry name" value="EFP"/>
    <property type="match status" value="1"/>
</dbReference>
<dbReference type="Pfam" id="PF08207">
    <property type="entry name" value="EFP_N"/>
    <property type="match status" value="1"/>
</dbReference>
<dbReference type="Pfam" id="PF09285">
    <property type="entry name" value="Elong-fact-P_C"/>
    <property type="match status" value="1"/>
</dbReference>
<dbReference type="PIRSF" id="PIRSF005901">
    <property type="entry name" value="EF-P"/>
    <property type="match status" value="1"/>
</dbReference>
<dbReference type="SMART" id="SM01185">
    <property type="entry name" value="EFP"/>
    <property type="match status" value="1"/>
</dbReference>
<dbReference type="SMART" id="SM00841">
    <property type="entry name" value="Elong-fact-P_C"/>
    <property type="match status" value="1"/>
</dbReference>
<dbReference type="SUPFAM" id="SSF50249">
    <property type="entry name" value="Nucleic acid-binding proteins"/>
    <property type="match status" value="2"/>
</dbReference>
<dbReference type="SUPFAM" id="SSF50104">
    <property type="entry name" value="Translation proteins SH3-like domain"/>
    <property type="match status" value="1"/>
</dbReference>
<dbReference type="PROSITE" id="PS01275">
    <property type="entry name" value="EFP"/>
    <property type="match status" value="1"/>
</dbReference>
<gene>
    <name evidence="1" type="primary">efp</name>
    <name type="ordered locus">Mkms_2405</name>
</gene>
<reference key="1">
    <citation type="submission" date="2006-12" db="EMBL/GenBank/DDBJ databases">
        <title>Complete sequence of chromosome of Mycobacterium sp. KMS.</title>
        <authorList>
            <consortium name="US DOE Joint Genome Institute"/>
            <person name="Copeland A."/>
            <person name="Lucas S."/>
            <person name="Lapidus A."/>
            <person name="Barry K."/>
            <person name="Detter J.C."/>
            <person name="Glavina del Rio T."/>
            <person name="Hammon N."/>
            <person name="Israni S."/>
            <person name="Dalin E."/>
            <person name="Tice H."/>
            <person name="Pitluck S."/>
            <person name="Kiss H."/>
            <person name="Brettin T."/>
            <person name="Bruce D."/>
            <person name="Han C."/>
            <person name="Tapia R."/>
            <person name="Gilna P."/>
            <person name="Schmutz J."/>
            <person name="Larimer F."/>
            <person name="Land M."/>
            <person name="Hauser L."/>
            <person name="Kyrpides N."/>
            <person name="Mikhailova N."/>
            <person name="Miller C.D."/>
            <person name="Richardson P."/>
        </authorList>
    </citation>
    <scope>NUCLEOTIDE SEQUENCE [LARGE SCALE GENOMIC DNA]</scope>
    <source>
        <strain>KMS</strain>
    </source>
</reference>
<organism>
    <name type="scientific">Mycobacterium sp. (strain KMS)</name>
    <dbReference type="NCBI Taxonomy" id="189918"/>
    <lineage>
        <taxon>Bacteria</taxon>
        <taxon>Bacillati</taxon>
        <taxon>Actinomycetota</taxon>
        <taxon>Actinomycetes</taxon>
        <taxon>Mycobacteriales</taxon>
        <taxon>Mycobacteriaceae</taxon>
        <taxon>Mycobacterium</taxon>
    </lineage>
</organism>
<sequence length="187" mass="20433">MASTADFKNGLVLQIDGQLWQIVEFQHVKPGKGPAFVRTKLKNVVSGKVVDKTYNAGVKVETATVDRRDATYLYRDGSDFVFMDSEDYEQHPLPESLVGRAADFLLESMPVQIAFHDGVPLYLELPVTVELLVASTEPGLQGDRSSAGTKPATMETGAEIQVPLFINTGDKLKVDSRDGSYLGRVNA</sequence>
<feature type="chain" id="PRO_1000010785" description="Elongation factor P">
    <location>
        <begin position="1"/>
        <end position="187"/>
    </location>
</feature>
<evidence type="ECO:0000255" key="1">
    <source>
        <dbReference type="HAMAP-Rule" id="MF_00141"/>
    </source>
</evidence>